<sequence length="287" mass="31835">MATIATMPVPETRANHTIYINNLNEKIKKDELKKSLYAIFSQFGQILDILVSRIMKMRGQAFVIFKEVTSATNALRSMQGFPFYDKPMRIQYAKTDSDIIAKMKGTYVERDRKREKRKPKSQETPAAKKAVQGGAAAPVVGAVQPVPGMPPMPQAPRIMHHMPGQPPYMPPPGMIPPPGLAPGQIPPGAMPPQQLMPGQMPPAQPLSENPPNHILFLTNLPEETNELMLSMLFNQFPGFKEVRLVPGRHDIAFVEFDNEVQAGAARDALQGFKITQNNAMKISFAKK</sequence>
<name>SNRPA_MOUSE</name>
<protein>
    <recommendedName>
        <fullName>U1 small nuclear ribonucleoprotein A</fullName>
        <shortName>U1 snRNP A</shortName>
        <shortName>U1-A</shortName>
        <shortName>U1A</shortName>
    </recommendedName>
</protein>
<keyword id="KW-0007">Acetylation</keyword>
<keyword id="KW-0488">Methylation</keyword>
<keyword id="KW-0507">mRNA processing</keyword>
<keyword id="KW-0508">mRNA splicing</keyword>
<keyword id="KW-0539">Nucleus</keyword>
<keyword id="KW-1185">Reference proteome</keyword>
<keyword id="KW-0677">Repeat</keyword>
<keyword id="KW-0687">Ribonucleoprotein</keyword>
<keyword id="KW-0694">RNA-binding</keyword>
<keyword id="KW-0747">Spliceosome</keyword>
<accession>Q62189</accession>
<accession>Q52LA2</accession>
<gene>
    <name type="primary">Snrpa</name>
    <name type="synonym">Rnu1a-1</name>
</gene>
<feature type="chain" id="PRO_0000081888" description="U1 small nuclear ribonucleoprotein A">
    <location>
        <begin position="1"/>
        <end position="287"/>
    </location>
</feature>
<feature type="domain" description="RRM 1" evidence="3">
    <location>
        <begin position="16"/>
        <end position="95"/>
    </location>
</feature>
<feature type="domain" description="RRM 2" evidence="3">
    <location>
        <begin position="213"/>
        <end position="287"/>
    </location>
</feature>
<feature type="region of interest" description="Disordered" evidence="4">
    <location>
        <begin position="106"/>
        <end position="134"/>
    </location>
</feature>
<feature type="compositionally biased region" description="Low complexity" evidence="4">
    <location>
        <begin position="125"/>
        <end position="134"/>
    </location>
</feature>
<feature type="modified residue" description="N6-acetyllysine" evidence="2">
    <location>
        <position position="66"/>
    </location>
</feature>
<feature type="modified residue" description="Omega-N-methylarginine" evidence="2">
    <location>
        <position position="157"/>
    </location>
</feature>
<organism>
    <name type="scientific">Mus musculus</name>
    <name type="common">Mouse</name>
    <dbReference type="NCBI Taxonomy" id="10090"/>
    <lineage>
        <taxon>Eukaryota</taxon>
        <taxon>Metazoa</taxon>
        <taxon>Chordata</taxon>
        <taxon>Craniata</taxon>
        <taxon>Vertebrata</taxon>
        <taxon>Euteleostomi</taxon>
        <taxon>Mammalia</taxon>
        <taxon>Eutheria</taxon>
        <taxon>Euarchontoglires</taxon>
        <taxon>Glires</taxon>
        <taxon>Rodentia</taxon>
        <taxon>Myomorpha</taxon>
        <taxon>Muroidea</taxon>
        <taxon>Muridae</taxon>
        <taxon>Murinae</taxon>
        <taxon>Mus</taxon>
        <taxon>Mus</taxon>
    </lineage>
</organism>
<comment type="function">
    <text evidence="1">Component of the spliceosomal U1 snRNP, which is essential for recognition of the pre-mRNA 5' splice-site and the subsequent assembly of the spliceosome. U1 snRNP is the first snRNP to interact with pre-mRNA. This interaction is required for the subsequent binding of U2 snRNP and the U4/U6/U5 tri-snRNP. SNRPA binds stem loop II of U1 snRNA. In a snRNP-free form (SF-A) may be involved in coupled pre-mRNA splicing and polyadenylation process. May bind preferentially to the 5'-UGCAC-3' motif on RNAs (By similarity).</text>
</comment>
<comment type="subunit">
    <text evidence="1 2">U1 snRNP is composed of the 7 core Sm proteins SNRPB, SNRPD1, SNRPD2, SNRPD3, SNRPE, SNRPF and SNRPG that assemble in a heptameric protein ring on the Sm site of the small nuclear RNA to form the core snRNP, and at least three U1 snRNP-specific proteins SNRNP70/U1-70K, SNRPA/U1-A and SNRPC/U1-C. Interacts with SFPQ; component of a snRNP-free complex with SFPQ (By similarity). Interacts with IVNS1ABP (via BACK domain); the interaction is indirect (By similarity).</text>
</comment>
<comment type="subcellular location">
    <subcellularLocation>
        <location evidence="1">Nucleus</location>
    </subcellularLocation>
</comment>
<comment type="similarity">
    <text evidence="5">Belongs to the RRM U1 A/B'' family.</text>
</comment>
<reference key="1">
    <citation type="journal article" date="1993" name="Nucleic Acids Res.">
        <title>Nucleotide sequence analysis of the A protein of the U1 small nuclear ribonucleoprotein particle: the murine protein contains a 5' amino-terminal tag.</title>
        <authorList>
            <person name="Bennett M.M."/>
            <person name="Baron M.A."/>
            <person name="Craft J."/>
        </authorList>
    </citation>
    <scope>NUCLEOTIDE SEQUENCE [MRNA]</scope>
    <source>
        <strain>BALB/cJ</strain>
        <tissue>Liver</tissue>
    </source>
</reference>
<reference key="2">
    <citation type="journal article" date="2004" name="Genome Res.">
        <title>The status, quality, and expansion of the NIH full-length cDNA project: the Mammalian Gene Collection (MGC).</title>
        <authorList>
            <consortium name="The MGC Project Team"/>
        </authorList>
    </citation>
    <scope>NUCLEOTIDE SEQUENCE [LARGE SCALE MRNA]</scope>
    <source>
        <strain>C57BL/6J</strain>
        <tissue>Mammary gland</tissue>
    </source>
</reference>
<reference key="3">
    <citation type="journal article" date="2010" name="Cell">
        <title>A tissue-specific atlas of mouse protein phosphorylation and expression.</title>
        <authorList>
            <person name="Huttlin E.L."/>
            <person name="Jedrychowski M.P."/>
            <person name="Elias J.E."/>
            <person name="Goswami T."/>
            <person name="Rad R."/>
            <person name="Beausoleil S.A."/>
            <person name="Villen J."/>
            <person name="Haas W."/>
            <person name="Sowa M.E."/>
            <person name="Gygi S.P."/>
        </authorList>
    </citation>
    <scope>IDENTIFICATION BY MASS SPECTROMETRY [LARGE SCALE ANALYSIS]</scope>
    <source>
        <tissue>Brain</tissue>
        <tissue>Lung</tissue>
        <tissue>Pancreas</tissue>
        <tissue>Spleen</tissue>
        <tissue>Testis</tissue>
    </source>
</reference>
<proteinExistence type="evidence at protein level"/>
<evidence type="ECO:0000250" key="1"/>
<evidence type="ECO:0000250" key="2">
    <source>
        <dbReference type="UniProtKB" id="P09012"/>
    </source>
</evidence>
<evidence type="ECO:0000255" key="3">
    <source>
        <dbReference type="PROSITE-ProRule" id="PRU00176"/>
    </source>
</evidence>
<evidence type="ECO:0000256" key="4">
    <source>
        <dbReference type="SAM" id="MobiDB-lite"/>
    </source>
</evidence>
<evidence type="ECO:0000305" key="5"/>
<dbReference type="EMBL" id="L15447">
    <property type="protein sequence ID" value="AAC37611.1"/>
    <property type="molecule type" value="mRNA"/>
</dbReference>
<dbReference type="EMBL" id="BC003229">
    <property type="protein sequence ID" value="AAH03229.1"/>
    <property type="molecule type" value="mRNA"/>
</dbReference>
<dbReference type="EMBL" id="BC094006">
    <property type="protein sequence ID" value="AAH94006.1"/>
    <property type="molecule type" value="mRNA"/>
</dbReference>
<dbReference type="EMBL" id="BC096648">
    <property type="protein sequence ID" value="AAH96648.1"/>
    <property type="molecule type" value="mRNA"/>
</dbReference>
<dbReference type="CCDS" id="CCDS21014.1"/>
<dbReference type="PIR" id="S42113">
    <property type="entry name" value="S42114"/>
</dbReference>
<dbReference type="RefSeq" id="NP_001040102.1">
    <property type="nucleotide sequence ID" value="NM_001046637.1"/>
</dbReference>
<dbReference type="RefSeq" id="NP_001272754.1">
    <property type="nucleotide sequence ID" value="NM_001285825.1"/>
</dbReference>
<dbReference type="RefSeq" id="NP_056597.3">
    <property type="nucleotide sequence ID" value="NM_015782.3"/>
</dbReference>
<dbReference type="SMR" id="Q62189"/>
<dbReference type="BioGRID" id="207327">
    <property type="interactions" value="19"/>
</dbReference>
<dbReference type="FunCoup" id="Q62189">
    <property type="interactions" value="3685"/>
</dbReference>
<dbReference type="IntAct" id="Q62189">
    <property type="interactions" value="3"/>
</dbReference>
<dbReference type="MINT" id="Q62189"/>
<dbReference type="STRING" id="10090.ENSMUSP00000079228"/>
<dbReference type="GlyGen" id="Q62189">
    <property type="glycosylation" value="1 site, 1 O-linked glycan (1 site)"/>
</dbReference>
<dbReference type="iPTMnet" id="Q62189"/>
<dbReference type="PhosphoSitePlus" id="Q62189"/>
<dbReference type="jPOST" id="Q62189"/>
<dbReference type="PaxDb" id="10090-ENSMUSP00000079228"/>
<dbReference type="PeptideAtlas" id="Q62189"/>
<dbReference type="ProteomicsDB" id="261394"/>
<dbReference type="Pumba" id="Q62189"/>
<dbReference type="TopDownProteomics" id="Q62189"/>
<dbReference type="Antibodypedia" id="3308">
    <property type="antibodies" value="341 antibodies from 33 providers"/>
</dbReference>
<dbReference type="DNASU" id="53607"/>
<dbReference type="Ensembl" id="ENSMUST00000080356.10">
    <property type="protein sequence ID" value="ENSMUSP00000079228.4"/>
    <property type="gene ID" value="ENSMUSG00000061479.16"/>
</dbReference>
<dbReference type="Ensembl" id="ENSMUST00000122202.8">
    <property type="protein sequence ID" value="ENSMUSP00000113678.2"/>
    <property type="gene ID" value="ENSMUSG00000061479.16"/>
</dbReference>
<dbReference type="Ensembl" id="ENSMUST00000163311.9">
    <property type="protein sequence ID" value="ENSMUSP00000131897.3"/>
    <property type="gene ID" value="ENSMUSG00000061479.16"/>
</dbReference>
<dbReference type="GeneID" id="53607"/>
<dbReference type="KEGG" id="mmu:53607"/>
<dbReference type="UCSC" id="uc009fvg.1">
    <property type="organism name" value="mouse"/>
</dbReference>
<dbReference type="AGR" id="MGI:1855690"/>
<dbReference type="CTD" id="6626"/>
<dbReference type="MGI" id="MGI:1855690">
    <property type="gene designation" value="Snrpa"/>
</dbReference>
<dbReference type="VEuPathDB" id="HostDB:ENSMUSG00000061479"/>
<dbReference type="eggNOG" id="KOG4206">
    <property type="taxonomic scope" value="Eukaryota"/>
</dbReference>
<dbReference type="GeneTree" id="ENSGT00390000007046"/>
<dbReference type="HOGENOM" id="CLU_041869_1_3_1"/>
<dbReference type="InParanoid" id="Q62189"/>
<dbReference type="OMA" id="VRMIPTK"/>
<dbReference type="OrthoDB" id="277802at2759"/>
<dbReference type="PhylomeDB" id="Q62189"/>
<dbReference type="TreeFam" id="TF313834"/>
<dbReference type="Reactome" id="R-MMU-72163">
    <property type="pathway name" value="mRNA Splicing - Major Pathway"/>
</dbReference>
<dbReference type="BioGRID-ORCS" id="53607">
    <property type="hits" value="18 hits in 79 CRISPR screens"/>
</dbReference>
<dbReference type="ChiTaRS" id="Snrpa">
    <property type="organism name" value="mouse"/>
</dbReference>
<dbReference type="PRO" id="PR:Q62189"/>
<dbReference type="Proteomes" id="UP000000589">
    <property type="component" value="Chromosome 7"/>
</dbReference>
<dbReference type="RNAct" id="Q62189">
    <property type="molecule type" value="protein"/>
</dbReference>
<dbReference type="Bgee" id="ENSMUSG00000061479">
    <property type="expression patterns" value="Expressed in embryonic brain and 73 other cell types or tissues"/>
</dbReference>
<dbReference type="ExpressionAtlas" id="Q62189">
    <property type="expression patterns" value="baseline and differential"/>
</dbReference>
<dbReference type="GO" id="GO:0005654">
    <property type="term" value="C:nucleoplasm"/>
    <property type="evidence" value="ECO:0007669"/>
    <property type="project" value="Ensembl"/>
</dbReference>
<dbReference type="GO" id="GO:0005681">
    <property type="term" value="C:spliceosomal complex"/>
    <property type="evidence" value="ECO:0000250"/>
    <property type="project" value="HGNC-UCL"/>
</dbReference>
<dbReference type="GO" id="GO:0005685">
    <property type="term" value="C:U1 snRNP"/>
    <property type="evidence" value="ECO:0000250"/>
    <property type="project" value="UniProtKB"/>
</dbReference>
<dbReference type="GO" id="GO:0046540">
    <property type="term" value="C:U4/U6 x U5 tri-snRNP complex"/>
    <property type="evidence" value="ECO:0007669"/>
    <property type="project" value="Ensembl"/>
</dbReference>
<dbReference type="GO" id="GO:0042802">
    <property type="term" value="F:identical protein binding"/>
    <property type="evidence" value="ECO:0007669"/>
    <property type="project" value="Ensembl"/>
</dbReference>
<dbReference type="GO" id="GO:0003723">
    <property type="term" value="F:RNA binding"/>
    <property type="evidence" value="ECO:0000250"/>
    <property type="project" value="UniProtKB"/>
</dbReference>
<dbReference type="GO" id="GO:0030619">
    <property type="term" value="F:U1 snRNA binding"/>
    <property type="evidence" value="ECO:0000250"/>
    <property type="project" value="UniProtKB"/>
</dbReference>
<dbReference type="GO" id="GO:1990446">
    <property type="term" value="F:U1 snRNP binding"/>
    <property type="evidence" value="ECO:0007669"/>
    <property type="project" value="Ensembl"/>
</dbReference>
<dbReference type="GO" id="GO:0006397">
    <property type="term" value="P:mRNA processing"/>
    <property type="evidence" value="ECO:0007669"/>
    <property type="project" value="UniProtKB-KW"/>
</dbReference>
<dbReference type="GO" id="GO:0008380">
    <property type="term" value="P:RNA splicing"/>
    <property type="evidence" value="ECO:0007669"/>
    <property type="project" value="UniProtKB-KW"/>
</dbReference>
<dbReference type="CDD" id="cd12477">
    <property type="entry name" value="RRM1_U1A"/>
    <property type="match status" value="1"/>
</dbReference>
<dbReference type="CDD" id="cd12480">
    <property type="entry name" value="RRM2_U1A"/>
    <property type="match status" value="1"/>
</dbReference>
<dbReference type="FunFam" id="3.30.70.330:FF:000039">
    <property type="entry name" value="U1 small nuclear ribonucleoprotein A"/>
    <property type="match status" value="1"/>
</dbReference>
<dbReference type="FunFam" id="3.30.70.330:FF:000029">
    <property type="entry name" value="U2 small nuclear ribonucleoprotein B"/>
    <property type="match status" value="1"/>
</dbReference>
<dbReference type="Gene3D" id="3.30.70.330">
    <property type="match status" value="2"/>
</dbReference>
<dbReference type="InterPro" id="IPR012677">
    <property type="entry name" value="Nucleotide-bd_a/b_plait_sf"/>
</dbReference>
<dbReference type="InterPro" id="IPR035979">
    <property type="entry name" value="RBD_domain_sf"/>
</dbReference>
<dbReference type="InterPro" id="IPR000504">
    <property type="entry name" value="RRM_dom"/>
</dbReference>
<dbReference type="InterPro" id="IPR034407">
    <property type="entry name" value="U1A_RRM1"/>
</dbReference>
<dbReference type="InterPro" id="IPR034409">
    <property type="entry name" value="U1A_RRM2"/>
</dbReference>
<dbReference type="PANTHER" id="PTHR10501">
    <property type="entry name" value="U1 SMALL NUCLEAR RIBONUCLEOPROTEIN A/U2 SMALL NUCLEAR RIBONUCLEOPROTEIN B"/>
    <property type="match status" value="1"/>
</dbReference>
<dbReference type="Pfam" id="PF00076">
    <property type="entry name" value="RRM_1"/>
    <property type="match status" value="2"/>
</dbReference>
<dbReference type="SMART" id="SM00360">
    <property type="entry name" value="RRM"/>
    <property type="match status" value="2"/>
</dbReference>
<dbReference type="SUPFAM" id="SSF54928">
    <property type="entry name" value="RNA-binding domain, RBD"/>
    <property type="match status" value="1"/>
</dbReference>
<dbReference type="PROSITE" id="PS50102">
    <property type="entry name" value="RRM"/>
    <property type="match status" value="2"/>
</dbReference>